<reference key="1">
    <citation type="journal article" date="2004" name="Gen. Comp. Endocrinol.">
        <title>The glycosylated androgenic hormone of the terrestrial isopod Porcellio scaber (Crustacea).</title>
        <authorList>
            <person name="Greve P."/>
            <person name="Braquart-Varnier C."/>
            <person name="Strub J.-M."/>
            <person name="Felix C."/>
            <person name="van Dorsselaer A."/>
            <person name="Martin G."/>
        </authorList>
    </citation>
    <scope>NUCLEOTIDE SEQUENCE [MRNA]</scope>
    <scope>PROTEIN SEQUENCE OF 22-32 AND 115-128</scope>
    <scope>MASS SPECTROMETRY</scope>
    <scope>GLYCOSYLATION AT ASN-132</scope>
</reference>
<reference key="2">
    <citation type="journal article" date="2003" name="Zool. Sci.">
        <title>Molecular cloning and expression analysis of cDNAs encoding androgenic gland hormone precursors from two porcellionidae species, Porcellio scaber and P. dilatatus.</title>
        <authorList>
            <person name="Ohira T."/>
            <person name="Hasegawa Y."/>
            <person name="Tominaga S."/>
            <person name="Okuno A."/>
            <person name="Nagasawa H."/>
        </authorList>
    </citation>
    <scope>NUCLEOTIDE SEQUENCE [MRNA]</scope>
    <source>
        <tissue>Androgenic gland</tissue>
    </source>
</reference>
<protein>
    <recommendedName>
        <fullName>Androgenic gland hormone</fullName>
    </recommendedName>
    <alternativeName>
        <fullName>Pos-AGH</fullName>
    </alternativeName>
    <component>
        <recommendedName>
            <fullName>Androgenic gland hormone B chain</fullName>
        </recommendedName>
    </component>
    <component>
        <recommendedName>
            <fullName>Androgenic gland hormone A chain</fullName>
        </recommendedName>
    </component>
</protein>
<accession>Q8I7X1</accession>
<accession>Q86SA9</accession>
<keyword id="KW-0165">Cleavage on pair of basic residues</keyword>
<keyword id="KW-0217">Developmental protein</keyword>
<keyword id="KW-0221">Differentiation</keyword>
<keyword id="KW-0903">Direct protein sequencing</keyword>
<keyword id="KW-1015">Disulfide bond</keyword>
<keyword id="KW-0325">Glycoprotein</keyword>
<keyword id="KW-0372">Hormone</keyword>
<keyword id="KW-0964">Secreted</keyword>
<keyword id="KW-0726">Sexual differentiation</keyword>
<keyword id="KW-0732">Signal</keyword>
<keyword id="KW-0744">Spermatogenesis</keyword>
<comment type="function">
    <text evidence="1">Controls sex differentiation and the formation of male appendages, spermatogenesis, pigmentation, and male specific behavior.</text>
</comment>
<comment type="subcellular location">
    <subcellularLocation>
        <location>Secreted</location>
    </subcellularLocation>
</comment>
<comment type="tissue specificity">
    <text>Androgenic gland.</text>
</comment>
<comment type="mass spectrometry">
    <molecule>Androgenic gland hormone B chain</molecule>
</comment>
<comment type="mass spectrometry">
    <molecule>Androgenic gland hormone A chain</molecule>
</comment>
<dbReference type="EMBL" id="AY169973">
    <property type="protein sequence ID" value="AAO11675.1"/>
    <property type="molecule type" value="mRNA"/>
</dbReference>
<dbReference type="EMBL" id="AB089810">
    <property type="protein sequence ID" value="BAC57012.1"/>
    <property type="molecule type" value="mRNA"/>
</dbReference>
<dbReference type="GlyCosmos" id="Q8I7X1">
    <property type="glycosylation" value="1 site, No reported glycans"/>
</dbReference>
<dbReference type="iPTMnet" id="Q8I7X1"/>
<dbReference type="GO" id="GO:0005576">
    <property type="term" value="C:extracellular region"/>
    <property type="evidence" value="ECO:0007669"/>
    <property type="project" value="UniProtKB-SubCell"/>
</dbReference>
<dbReference type="GO" id="GO:0005179">
    <property type="term" value="F:hormone activity"/>
    <property type="evidence" value="ECO:0007669"/>
    <property type="project" value="UniProtKB-KW"/>
</dbReference>
<dbReference type="GO" id="GO:0030154">
    <property type="term" value="P:cell differentiation"/>
    <property type="evidence" value="ECO:0007669"/>
    <property type="project" value="UniProtKB-KW"/>
</dbReference>
<dbReference type="GO" id="GO:0007548">
    <property type="term" value="P:sex differentiation"/>
    <property type="evidence" value="ECO:0007669"/>
    <property type="project" value="UniProtKB-KW"/>
</dbReference>
<dbReference type="GO" id="GO:0007283">
    <property type="term" value="P:spermatogenesis"/>
    <property type="evidence" value="ECO:0007669"/>
    <property type="project" value="UniProtKB-KW"/>
</dbReference>
<dbReference type="InterPro" id="IPR020382">
    <property type="entry name" value="AGH"/>
</dbReference>
<dbReference type="Pfam" id="PF17558">
    <property type="entry name" value="AGH"/>
    <property type="match status" value="1"/>
</dbReference>
<gene>
    <name type="primary">AGH</name>
</gene>
<name>AGH_PORSC</name>
<sequence>MKGLLFIVSLLCLTLHQRVWAYQVIGMKSDVICADIRFTVHCICNELGLFPTSRLSKPCPWPNRGRRSADDEDYLFEEDEDDEFFHPRALSPPAAKSGDERLEDEVSFHSRSKRDIAFHEECCNIRTEHKCNKTTVELYCRRYTR</sequence>
<feature type="signal peptide" evidence="2">
    <location>
        <begin position="1"/>
        <end position="21"/>
    </location>
</feature>
<feature type="peptide" id="PRO_0000020650" description="Androgenic gland hormone B chain">
    <location>
        <begin position="22"/>
        <end position="65"/>
    </location>
</feature>
<feature type="propeptide" id="PRO_0000020651" description="C peptide">
    <location>
        <begin position="68"/>
        <end position="112"/>
    </location>
</feature>
<feature type="peptide" id="PRO_0000020652" description="Androgenic gland hormone A chain">
    <location>
        <begin position="115"/>
        <end position="145"/>
    </location>
</feature>
<feature type="glycosylation site" description="N-linked (GlcNAc...) asparagine" evidence="2">
    <location>
        <position position="132"/>
    </location>
</feature>
<feature type="disulfide bond" description="Or C-33 with C-124" evidence="1">
    <location>
        <begin position="33"/>
        <end position="122"/>
    </location>
</feature>
<feature type="disulfide bond" description="Or C-44 with C-59" evidence="1">
    <location>
        <begin position="42"/>
        <end position="59"/>
    </location>
</feature>
<feature type="disulfide bond" description="Or C-42 with C-141" evidence="1">
    <location>
        <begin position="44"/>
        <end position="140"/>
    </location>
</feature>
<feature type="disulfide bond" description="Or C-123 with C-132" evidence="1">
    <location>
        <begin position="123"/>
        <end position="131"/>
    </location>
</feature>
<feature type="sequence conflict" description="In Ref. 2; BAC57012." evidence="3" ref="2">
    <original>S</original>
    <variation>N</variation>
    <location>
        <position position="97"/>
    </location>
</feature>
<proteinExistence type="evidence at protein level"/>
<organism>
    <name type="scientific">Porcellio scaber</name>
    <name type="common">Common rough woodlouse</name>
    <name type="synonym">Oniscus granulatus</name>
    <dbReference type="NCBI Taxonomy" id="64697"/>
    <lineage>
        <taxon>Eukaryota</taxon>
        <taxon>Metazoa</taxon>
        <taxon>Ecdysozoa</taxon>
        <taxon>Arthropoda</taxon>
        <taxon>Crustacea</taxon>
        <taxon>Multicrustacea</taxon>
        <taxon>Malacostraca</taxon>
        <taxon>Eumalacostraca</taxon>
        <taxon>Peracarida</taxon>
        <taxon>Isopoda</taxon>
        <taxon>Oniscidea</taxon>
        <taxon>Crinocheta</taxon>
        <taxon>Porcellionidae</taxon>
        <taxon>Porcellio</taxon>
    </lineage>
</organism>
<evidence type="ECO:0000250" key="1"/>
<evidence type="ECO:0000269" key="2">
    <source>
    </source>
</evidence>
<evidence type="ECO:0000305" key="3"/>